<sequence length="118" mass="13210">MARIAGINIPDQKHAVIALTAIYGIGKTRAKAICAAAGIAEDVKIRELSEEQIDKLRDEVGKFTVEGDLRREVTLNIKRLLDLGCYRGLRHRRGLPVRGQRTKTNARTRKGPRKPIKK</sequence>
<accession>Q0I140</accession>
<keyword id="KW-0687">Ribonucleoprotein</keyword>
<keyword id="KW-0689">Ribosomal protein</keyword>
<keyword id="KW-0694">RNA-binding</keyword>
<keyword id="KW-0699">rRNA-binding</keyword>
<keyword id="KW-0820">tRNA-binding</keyword>
<dbReference type="EMBL" id="CP000436">
    <property type="protein sequence ID" value="ABI24362.1"/>
    <property type="molecule type" value="Genomic_DNA"/>
</dbReference>
<dbReference type="SMR" id="Q0I140"/>
<dbReference type="KEGG" id="hso:HS_0081"/>
<dbReference type="eggNOG" id="COG0099">
    <property type="taxonomic scope" value="Bacteria"/>
</dbReference>
<dbReference type="HOGENOM" id="CLU_103849_1_2_6"/>
<dbReference type="GO" id="GO:0005829">
    <property type="term" value="C:cytosol"/>
    <property type="evidence" value="ECO:0007669"/>
    <property type="project" value="TreeGrafter"/>
</dbReference>
<dbReference type="GO" id="GO:0015935">
    <property type="term" value="C:small ribosomal subunit"/>
    <property type="evidence" value="ECO:0007669"/>
    <property type="project" value="TreeGrafter"/>
</dbReference>
<dbReference type="GO" id="GO:0019843">
    <property type="term" value="F:rRNA binding"/>
    <property type="evidence" value="ECO:0007669"/>
    <property type="project" value="UniProtKB-UniRule"/>
</dbReference>
<dbReference type="GO" id="GO:0003735">
    <property type="term" value="F:structural constituent of ribosome"/>
    <property type="evidence" value="ECO:0007669"/>
    <property type="project" value="InterPro"/>
</dbReference>
<dbReference type="GO" id="GO:0000049">
    <property type="term" value="F:tRNA binding"/>
    <property type="evidence" value="ECO:0007669"/>
    <property type="project" value="UniProtKB-UniRule"/>
</dbReference>
<dbReference type="GO" id="GO:0006412">
    <property type="term" value="P:translation"/>
    <property type="evidence" value="ECO:0007669"/>
    <property type="project" value="UniProtKB-UniRule"/>
</dbReference>
<dbReference type="FunFam" id="1.10.8.50:FF:000001">
    <property type="entry name" value="30S ribosomal protein S13"/>
    <property type="match status" value="1"/>
</dbReference>
<dbReference type="FunFam" id="4.10.910.10:FF:000001">
    <property type="entry name" value="30S ribosomal protein S13"/>
    <property type="match status" value="1"/>
</dbReference>
<dbReference type="Gene3D" id="1.10.8.50">
    <property type="match status" value="1"/>
</dbReference>
<dbReference type="Gene3D" id="4.10.910.10">
    <property type="entry name" value="30s ribosomal protein s13, domain 2"/>
    <property type="match status" value="1"/>
</dbReference>
<dbReference type="HAMAP" id="MF_01315">
    <property type="entry name" value="Ribosomal_uS13"/>
    <property type="match status" value="1"/>
</dbReference>
<dbReference type="InterPro" id="IPR027437">
    <property type="entry name" value="Rbsml_uS13_C"/>
</dbReference>
<dbReference type="InterPro" id="IPR001892">
    <property type="entry name" value="Ribosomal_uS13"/>
</dbReference>
<dbReference type="InterPro" id="IPR010979">
    <property type="entry name" value="Ribosomal_uS13-like_H2TH"/>
</dbReference>
<dbReference type="InterPro" id="IPR019980">
    <property type="entry name" value="Ribosomal_uS13_bac-type"/>
</dbReference>
<dbReference type="InterPro" id="IPR018269">
    <property type="entry name" value="Ribosomal_uS13_CS"/>
</dbReference>
<dbReference type="NCBIfam" id="TIGR03631">
    <property type="entry name" value="uS13_bact"/>
    <property type="match status" value="1"/>
</dbReference>
<dbReference type="PANTHER" id="PTHR10871">
    <property type="entry name" value="30S RIBOSOMAL PROTEIN S13/40S RIBOSOMAL PROTEIN S18"/>
    <property type="match status" value="1"/>
</dbReference>
<dbReference type="PANTHER" id="PTHR10871:SF1">
    <property type="entry name" value="SMALL RIBOSOMAL SUBUNIT PROTEIN US13M"/>
    <property type="match status" value="1"/>
</dbReference>
<dbReference type="Pfam" id="PF00416">
    <property type="entry name" value="Ribosomal_S13"/>
    <property type="match status" value="1"/>
</dbReference>
<dbReference type="PIRSF" id="PIRSF002134">
    <property type="entry name" value="Ribosomal_S13"/>
    <property type="match status" value="1"/>
</dbReference>
<dbReference type="SUPFAM" id="SSF46946">
    <property type="entry name" value="S13-like H2TH domain"/>
    <property type="match status" value="1"/>
</dbReference>
<dbReference type="PROSITE" id="PS00646">
    <property type="entry name" value="RIBOSOMAL_S13_1"/>
    <property type="match status" value="1"/>
</dbReference>
<dbReference type="PROSITE" id="PS50159">
    <property type="entry name" value="RIBOSOMAL_S13_2"/>
    <property type="match status" value="1"/>
</dbReference>
<proteinExistence type="inferred from homology"/>
<feature type="chain" id="PRO_0000306616" description="Small ribosomal subunit protein uS13">
    <location>
        <begin position="1"/>
        <end position="118"/>
    </location>
</feature>
<feature type="region of interest" description="Disordered" evidence="2">
    <location>
        <begin position="94"/>
        <end position="118"/>
    </location>
</feature>
<name>RS13_HISS1</name>
<reference key="1">
    <citation type="journal article" date="2007" name="J. Bacteriol.">
        <title>Complete genome sequence of Haemophilus somnus (Histophilus somni) strain 129Pt and comparison to Haemophilus ducreyi 35000HP and Haemophilus influenzae Rd.</title>
        <authorList>
            <person name="Challacombe J.F."/>
            <person name="Duncan A.J."/>
            <person name="Brettin T.S."/>
            <person name="Bruce D."/>
            <person name="Chertkov O."/>
            <person name="Detter J.C."/>
            <person name="Han C.S."/>
            <person name="Misra M."/>
            <person name="Richardson P."/>
            <person name="Tapia R."/>
            <person name="Thayer N."/>
            <person name="Xie G."/>
            <person name="Inzana T.J."/>
        </authorList>
    </citation>
    <scope>NUCLEOTIDE SEQUENCE [LARGE SCALE GENOMIC DNA]</scope>
    <source>
        <strain>129Pt</strain>
    </source>
</reference>
<evidence type="ECO:0000255" key="1">
    <source>
        <dbReference type="HAMAP-Rule" id="MF_01315"/>
    </source>
</evidence>
<evidence type="ECO:0000256" key="2">
    <source>
        <dbReference type="SAM" id="MobiDB-lite"/>
    </source>
</evidence>
<evidence type="ECO:0000305" key="3"/>
<gene>
    <name evidence="1" type="primary">rpsM</name>
    <name type="ordered locus">HS_0081</name>
</gene>
<comment type="function">
    <text evidence="1">Located at the top of the head of the 30S subunit, it contacts several helices of the 16S rRNA. In the 70S ribosome it contacts the 23S rRNA (bridge B1a) and protein L5 of the 50S subunit (bridge B1b), connecting the 2 subunits; these bridges are implicated in subunit movement. Contacts the tRNAs in the A and P-sites.</text>
</comment>
<comment type="subunit">
    <text evidence="1">Part of the 30S ribosomal subunit. Forms a loose heterodimer with protein S19. Forms two bridges to the 50S subunit in the 70S ribosome.</text>
</comment>
<comment type="similarity">
    <text evidence="1">Belongs to the universal ribosomal protein uS13 family.</text>
</comment>
<protein>
    <recommendedName>
        <fullName evidence="1">Small ribosomal subunit protein uS13</fullName>
    </recommendedName>
    <alternativeName>
        <fullName evidence="3">30S ribosomal protein S13</fullName>
    </alternativeName>
</protein>
<organism>
    <name type="scientific">Histophilus somni (strain 129Pt)</name>
    <name type="common">Haemophilus somnus</name>
    <dbReference type="NCBI Taxonomy" id="205914"/>
    <lineage>
        <taxon>Bacteria</taxon>
        <taxon>Pseudomonadati</taxon>
        <taxon>Pseudomonadota</taxon>
        <taxon>Gammaproteobacteria</taxon>
        <taxon>Pasteurellales</taxon>
        <taxon>Pasteurellaceae</taxon>
        <taxon>Histophilus</taxon>
    </lineage>
</organism>